<feature type="chain" id="PRO_0000384776" description="Ribosome maturation factor RimP">
    <location>
        <begin position="1"/>
        <end position="153"/>
    </location>
</feature>
<dbReference type="EMBL" id="CP000473">
    <property type="protein sequence ID" value="ABJ86132.1"/>
    <property type="status" value="ALT_INIT"/>
    <property type="molecule type" value="Genomic_DNA"/>
</dbReference>
<dbReference type="SMR" id="Q01W33"/>
<dbReference type="FunCoup" id="Q01W33">
    <property type="interactions" value="357"/>
</dbReference>
<dbReference type="STRING" id="234267.Acid_5179"/>
<dbReference type="KEGG" id="sus:Acid_5179"/>
<dbReference type="eggNOG" id="COG0779">
    <property type="taxonomic scope" value="Bacteria"/>
</dbReference>
<dbReference type="HOGENOM" id="CLU_070525_2_2_0"/>
<dbReference type="InParanoid" id="Q01W33"/>
<dbReference type="GO" id="GO:0005829">
    <property type="term" value="C:cytosol"/>
    <property type="evidence" value="ECO:0007669"/>
    <property type="project" value="TreeGrafter"/>
</dbReference>
<dbReference type="GO" id="GO:0000028">
    <property type="term" value="P:ribosomal small subunit assembly"/>
    <property type="evidence" value="ECO:0007669"/>
    <property type="project" value="TreeGrafter"/>
</dbReference>
<dbReference type="GO" id="GO:0006412">
    <property type="term" value="P:translation"/>
    <property type="evidence" value="ECO:0007669"/>
    <property type="project" value="TreeGrafter"/>
</dbReference>
<dbReference type="CDD" id="cd01734">
    <property type="entry name" value="YlxS_C"/>
    <property type="match status" value="1"/>
</dbReference>
<dbReference type="FunFam" id="3.30.300.70:FF:000001">
    <property type="entry name" value="Ribosome maturation factor RimP"/>
    <property type="match status" value="1"/>
</dbReference>
<dbReference type="Gene3D" id="2.30.30.180">
    <property type="entry name" value="Ribosome maturation factor RimP, C-terminal domain"/>
    <property type="match status" value="1"/>
</dbReference>
<dbReference type="Gene3D" id="3.30.300.70">
    <property type="entry name" value="RimP-like superfamily, N-terminal"/>
    <property type="match status" value="1"/>
</dbReference>
<dbReference type="HAMAP" id="MF_01077">
    <property type="entry name" value="RimP"/>
    <property type="match status" value="1"/>
</dbReference>
<dbReference type="InterPro" id="IPR003728">
    <property type="entry name" value="Ribosome_maturation_RimP"/>
</dbReference>
<dbReference type="InterPro" id="IPR028998">
    <property type="entry name" value="RimP_C"/>
</dbReference>
<dbReference type="InterPro" id="IPR036847">
    <property type="entry name" value="RimP_C_sf"/>
</dbReference>
<dbReference type="InterPro" id="IPR028989">
    <property type="entry name" value="RimP_N"/>
</dbReference>
<dbReference type="InterPro" id="IPR035956">
    <property type="entry name" value="RimP_N_sf"/>
</dbReference>
<dbReference type="PANTHER" id="PTHR33867">
    <property type="entry name" value="RIBOSOME MATURATION FACTOR RIMP"/>
    <property type="match status" value="1"/>
</dbReference>
<dbReference type="PANTHER" id="PTHR33867:SF1">
    <property type="entry name" value="RIBOSOME MATURATION FACTOR RIMP"/>
    <property type="match status" value="1"/>
</dbReference>
<dbReference type="Pfam" id="PF17384">
    <property type="entry name" value="DUF150_C"/>
    <property type="match status" value="1"/>
</dbReference>
<dbReference type="Pfam" id="PF02576">
    <property type="entry name" value="RimP_N"/>
    <property type="match status" value="1"/>
</dbReference>
<dbReference type="SUPFAM" id="SSF74942">
    <property type="entry name" value="YhbC-like, C-terminal domain"/>
    <property type="match status" value="1"/>
</dbReference>
<dbReference type="SUPFAM" id="SSF75420">
    <property type="entry name" value="YhbC-like, N-terminal domain"/>
    <property type="match status" value="1"/>
</dbReference>
<gene>
    <name evidence="1" type="primary">rimP</name>
    <name type="ordered locus">Acid_5179</name>
</gene>
<proteinExistence type="inferred from homology"/>
<organism>
    <name type="scientific">Solibacter usitatus (strain Ellin6076)</name>
    <dbReference type="NCBI Taxonomy" id="234267"/>
    <lineage>
        <taxon>Bacteria</taxon>
        <taxon>Pseudomonadati</taxon>
        <taxon>Acidobacteriota</taxon>
        <taxon>Terriglobia</taxon>
        <taxon>Bryobacterales</taxon>
        <taxon>Solibacteraceae</taxon>
        <taxon>Candidatus Solibacter</taxon>
    </lineage>
</organism>
<sequence length="153" mass="16896">MQEAVTSKVEEVAQRVAQSEGLELVEVEVKGGGSARLVRISIDKPEGVTHADCQTVSDKVGEILEAEDAIPGHYTLEVSSPGVERKLLKPQDYQRFHGQKAKITVREEVDGRRTWEGTLAGFADGVISLEVAPGEIRRLPFDQVKKANLKFEW</sequence>
<keyword id="KW-0963">Cytoplasm</keyword>
<keyword id="KW-0690">Ribosome biogenesis</keyword>
<protein>
    <recommendedName>
        <fullName evidence="1">Ribosome maturation factor RimP</fullName>
    </recommendedName>
</protein>
<evidence type="ECO:0000255" key="1">
    <source>
        <dbReference type="HAMAP-Rule" id="MF_01077"/>
    </source>
</evidence>
<evidence type="ECO:0000305" key="2"/>
<accession>Q01W33</accession>
<name>RIMP_SOLUE</name>
<comment type="function">
    <text evidence="1">Required for maturation of 30S ribosomal subunits.</text>
</comment>
<comment type="subcellular location">
    <subcellularLocation>
        <location evidence="1">Cytoplasm</location>
    </subcellularLocation>
</comment>
<comment type="similarity">
    <text evidence="1">Belongs to the RimP family.</text>
</comment>
<comment type="sequence caution" evidence="2">
    <conflict type="erroneous initiation">
        <sequence resource="EMBL-CDS" id="ABJ86132"/>
    </conflict>
</comment>
<reference key="1">
    <citation type="journal article" date="2009" name="Appl. Environ. Microbiol.">
        <title>Three genomes from the phylum Acidobacteria provide insight into the lifestyles of these microorganisms in soils.</title>
        <authorList>
            <person name="Ward N.L."/>
            <person name="Challacombe J.F."/>
            <person name="Janssen P.H."/>
            <person name="Henrissat B."/>
            <person name="Coutinho P.M."/>
            <person name="Wu M."/>
            <person name="Xie G."/>
            <person name="Haft D.H."/>
            <person name="Sait M."/>
            <person name="Badger J."/>
            <person name="Barabote R.D."/>
            <person name="Bradley B."/>
            <person name="Brettin T.S."/>
            <person name="Brinkac L.M."/>
            <person name="Bruce D."/>
            <person name="Creasy T."/>
            <person name="Daugherty S.C."/>
            <person name="Davidsen T.M."/>
            <person name="DeBoy R.T."/>
            <person name="Detter J.C."/>
            <person name="Dodson R.J."/>
            <person name="Durkin A.S."/>
            <person name="Ganapathy A."/>
            <person name="Gwinn-Giglio M."/>
            <person name="Han C.S."/>
            <person name="Khouri H."/>
            <person name="Kiss H."/>
            <person name="Kothari S.P."/>
            <person name="Madupu R."/>
            <person name="Nelson K.E."/>
            <person name="Nelson W.C."/>
            <person name="Paulsen I."/>
            <person name="Penn K."/>
            <person name="Ren Q."/>
            <person name="Rosovitz M.J."/>
            <person name="Selengut J.D."/>
            <person name="Shrivastava S."/>
            <person name="Sullivan S.A."/>
            <person name="Tapia R."/>
            <person name="Thompson L.S."/>
            <person name="Watkins K.L."/>
            <person name="Yang Q."/>
            <person name="Yu C."/>
            <person name="Zafar N."/>
            <person name="Zhou L."/>
            <person name="Kuske C.R."/>
        </authorList>
    </citation>
    <scope>NUCLEOTIDE SEQUENCE [LARGE SCALE GENOMIC DNA]</scope>
    <source>
        <strain>Ellin6076</strain>
    </source>
</reference>